<evidence type="ECO:0000250" key="1">
    <source>
        <dbReference type="UniProtKB" id="Q03954"/>
    </source>
</evidence>
<evidence type="ECO:0000250" key="2">
    <source>
        <dbReference type="UniProtKB" id="Q50HP3"/>
    </source>
</evidence>
<evidence type="ECO:0000255" key="3"/>
<evidence type="ECO:0000305" key="4"/>
<proteinExistence type="inferred from homology"/>
<reference key="1">
    <citation type="journal article" date="2004" name="Nature">
        <title>Genome evolution in yeasts.</title>
        <authorList>
            <person name="Dujon B."/>
            <person name="Sherman D."/>
            <person name="Fischer G."/>
            <person name="Durrens P."/>
            <person name="Casaregola S."/>
            <person name="Lafontaine I."/>
            <person name="de Montigny J."/>
            <person name="Marck C."/>
            <person name="Neuveglise C."/>
            <person name="Talla E."/>
            <person name="Goffard N."/>
            <person name="Frangeul L."/>
            <person name="Aigle M."/>
            <person name="Anthouard V."/>
            <person name="Babour A."/>
            <person name="Barbe V."/>
            <person name="Barnay S."/>
            <person name="Blanchin S."/>
            <person name="Beckerich J.-M."/>
            <person name="Beyne E."/>
            <person name="Bleykasten C."/>
            <person name="Boisrame A."/>
            <person name="Boyer J."/>
            <person name="Cattolico L."/>
            <person name="Confanioleri F."/>
            <person name="de Daruvar A."/>
            <person name="Despons L."/>
            <person name="Fabre E."/>
            <person name="Fairhead C."/>
            <person name="Ferry-Dumazet H."/>
            <person name="Groppi A."/>
            <person name="Hantraye F."/>
            <person name="Hennequin C."/>
            <person name="Jauniaux N."/>
            <person name="Joyet P."/>
            <person name="Kachouri R."/>
            <person name="Kerrest A."/>
            <person name="Koszul R."/>
            <person name="Lemaire M."/>
            <person name="Lesur I."/>
            <person name="Ma L."/>
            <person name="Muller H."/>
            <person name="Nicaud J.-M."/>
            <person name="Nikolski M."/>
            <person name="Oztas S."/>
            <person name="Ozier-Kalogeropoulos O."/>
            <person name="Pellenz S."/>
            <person name="Potier S."/>
            <person name="Richard G.-F."/>
            <person name="Straub M.-L."/>
            <person name="Suleau A."/>
            <person name="Swennen D."/>
            <person name="Tekaia F."/>
            <person name="Wesolowski-Louvel M."/>
            <person name="Westhof E."/>
            <person name="Wirth B."/>
            <person name="Zeniou-Meyer M."/>
            <person name="Zivanovic Y."/>
            <person name="Bolotin-Fukuhara M."/>
            <person name="Thierry A."/>
            <person name="Bouchier C."/>
            <person name="Caudron B."/>
            <person name="Scarpelli C."/>
            <person name="Gaillardin C."/>
            <person name="Weissenbach J."/>
            <person name="Wincker P."/>
            <person name="Souciet J.-L."/>
        </authorList>
    </citation>
    <scope>NUCLEOTIDE SEQUENCE [LARGE SCALE GENOMIC DNA]</scope>
    <source>
        <strain>ATCC 36239 / CBS 767 / BCRC 21394 / JCM 1990 / NBRC 0083 / IGC 2968</strain>
    </source>
</reference>
<organism>
    <name type="scientific">Debaryomyces hansenii (strain ATCC 36239 / CBS 767 / BCRC 21394 / JCM 1990 / NBRC 0083 / IGC 2968)</name>
    <name type="common">Yeast</name>
    <name type="synonym">Torulaspora hansenii</name>
    <dbReference type="NCBI Taxonomy" id="284592"/>
    <lineage>
        <taxon>Eukaryota</taxon>
        <taxon>Fungi</taxon>
        <taxon>Dikarya</taxon>
        <taxon>Ascomycota</taxon>
        <taxon>Saccharomycotina</taxon>
        <taxon>Pichiomycetes</taxon>
        <taxon>Debaryomycetaceae</taxon>
        <taxon>Debaryomyces</taxon>
    </lineage>
</organism>
<gene>
    <name type="primary">SPC19</name>
    <name type="ordered locus">DEHA2G15840g</name>
</gene>
<comment type="function">
    <text evidence="1">Component of the DASH complex that connects microtubules with kinetochores and couples microtubule depolymerisation to chromosome movement; it is involved in retrieving kinetochores to the spindle poles before their re-orientation on the spindle in early mitosis and allows microtubule depolymerization to pull chromosomes apart and resist detachment during anaphase. Kinetochores, consisting of a centromere-associated inner segment and a microtubule-contacting outer segment, play a crucial role in chromosome segregation by mediating the physical connection between centromeric DNA and microtubules. Kinetochores also serve as an input point for the spindle assembly checkpoint, which delays anaphase until all chromosomes have bioriented on the mitotic spindle.</text>
</comment>
<comment type="subunit">
    <text evidence="1 2">Component of the DASH complex consisting of ASK1, DAD1, DAD2, DAD3, DAD4, DAM1, DUO1, HSK3, SPC19 and SPC34, with a stoichiometry of one copy of each subunit per complex. Multiple DASH complexes oligomerize to form a ring that encircles spindle microtubules and organizes the rod-like NDC80 complexes of the outer kinetochore. DASH complex oligomerization strengthens microtubule attachments (By similarity). On cytoplasmic microtubules, DASH complexes appear to form patches instead of rings (By similarity).</text>
</comment>
<comment type="subcellular location">
    <subcellularLocation>
        <location evidence="1">Nucleus</location>
    </subcellularLocation>
    <subcellularLocation>
        <location evidence="1">Cytoplasm</location>
        <location evidence="1">Cytoskeleton</location>
        <location evidence="1">Spindle</location>
    </subcellularLocation>
    <subcellularLocation>
        <location evidence="1">Chromosome</location>
        <location evidence="1">Centromere</location>
        <location evidence="1">Kinetochore</location>
    </subcellularLocation>
</comment>
<comment type="similarity">
    <text evidence="4">Belongs to the DASH complex SPC19 family.</text>
</comment>
<accession>Q6BHU0</accession>
<dbReference type="EMBL" id="CR382139">
    <property type="protein sequence ID" value="CAG90727.2"/>
    <property type="molecule type" value="Genomic_DNA"/>
</dbReference>
<dbReference type="RefSeq" id="XP_462231.2">
    <property type="nucleotide sequence ID" value="XM_462231.1"/>
</dbReference>
<dbReference type="SMR" id="Q6BHU0"/>
<dbReference type="FunCoup" id="Q6BHU0">
    <property type="interactions" value="39"/>
</dbReference>
<dbReference type="STRING" id="284592.Q6BHU0"/>
<dbReference type="GeneID" id="2905155"/>
<dbReference type="KEGG" id="dha:DEHA2G15840g"/>
<dbReference type="VEuPathDB" id="FungiDB:DEHA2G15840g"/>
<dbReference type="eggNOG" id="ENOG502SDEQ">
    <property type="taxonomic scope" value="Eukaryota"/>
</dbReference>
<dbReference type="HOGENOM" id="CLU_112993_1_0_1"/>
<dbReference type="InParanoid" id="Q6BHU0"/>
<dbReference type="OMA" id="DCCEEAH"/>
<dbReference type="OrthoDB" id="3361333at2759"/>
<dbReference type="Proteomes" id="UP000000599">
    <property type="component" value="Chromosome G"/>
</dbReference>
<dbReference type="GO" id="GO:0005737">
    <property type="term" value="C:cytoplasm"/>
    <property type="evidence" value="ECO:0007669"/>
    <property type="project" value="UniProtKB-KW"/>
</dbReference>
<dbReference type="GO" id="GO:0042729">
    <property type="term" value="C:DASH complex"/>
    <property type="evidence" value="ECO:0000250"/>
    <property type="project" value="UniProtKB"/>
</dbReference>
<dbReference type="GO" id="GO:0005876">
    <property type="term" value="C:spindle microtubule"/>
    <property type="evidence" value="ECO:0007669"/>
    <property type="project" value="InterPro"/>
</dbReference>
<dbReference type="GO" id="GO:0008608">
    <property type="term" value="P:attachment of spindle microtubules to kinetochore"/>
    <property type="evidence" value="ECO:0000250"/>
    <property type="project" value="UniProtKB"/>
</dbReference>
<dbReference type="GO" id="GO:0051301">
    <property type="term" value="P:cell division"/>
    <property type="evidence" value="ECO:0007669"/>
    <property type="project" value="UniProtKB-KW"/>
</dbReference>
<dbReference type="GO" id="GO:1990758">
    <property type="term" value="P:mitotic sister chromatid biorientation"/>
    <property type="evidence" value="ECO:0000250"/>
    <property type="project" value="UniProtKB"/>
</dbReference>
<dbReference type="GO" id="GO:1990976">
    <property type="term" value="P:protein transport along microtubule to mitotic spindle pole body"/>
    <property type="evidence" value="ECO:0000250"/>
    <property type="project" value="UniProtKB"/>
</dbReference>
<dbReference type="InterPro" id="IPR013251">
    <property type="entry name" value="DASH_Spc19"/>
</dbReference>
<dbReference type="PANTHER" id="PTHR28262">
    <property type="entry name" value="DASH COMPLEX SUBUNIT SPC19"/>
    <property type="match status" value="1"/>
</dbReference>
<dbReference type="PANTHER" id="PTHR28262:SF1">
    <property type="entry name" value="DASH COMPLEX SUBUNIT SPC19"/>
    <property type="match status" value="1"/>
</dbReference>
<dbReference type="Pfam" id="PF08287">
    <property type="entry name" value="DASH_Spc19"/>
    <property type="match status" value="1"/>
</dbReference>
<name>SPC19_DEBHA</name>
<sequence length="177" mass="19783">MSHTYNSLSNCISSLSASVALLNDSLKTIDNATKDIPRLKKVLSTNKVFGLVPESDLESAKRNIQNEIQPQINALVIKIEKELSKLKRKKTNLASKVDLQQVRLENAAKSNRDSLSGIKGITANRISKGDIDESKLARLKLLQNKKERLKYSLSRLNLQDKRARLSTIPSLPPHRDS</sequence>
<keyword id="KW-0131">Cell cycle</keyword>
<keyword id="KW-0132">Cell division</keyword>
<keyword id="KW-0137">Centromere</keyword>
<keyword id="KW-0158">Chromosome</keyword>
<keyword id="KW-0159">Chromosome partition</keyword>
<keyword id="KW-0175">Coiled coil</keyword>
<keyword id="KW-0963">Cytoplasm</keyword>
<keyword id="KW-0206">Cytoskeleton</keyword>
<keyword id="KW-0995">Kinetochore</keyword>
<keyword id="KW-0493">Microtubule</keyword>
<keyword id="KW-0498">Mitosis</keyword>
<keyword id="KW-0539">Nucleus</keyword>
<keyword id="KW-1185">Reference proteome</keyword>
<protein>
    <recommendedName>
        <fullName>DASH complex subunit SPC19</fullName>
    </recommendedName>
    <alternativeName>
        <fullName>Outer kinetochore protein SPC19</fullName>
    </alternativeName>
</protein>
<feature type="chain" id="PRO_0000142589" description="DASH complex subunit SPC19">
    <location>
        <begin position="1"/>
        <end position="177"/>
    </location>
</feature>
<feature type="coiled-coil region" evidence="3">
    <location>
        <begin position="71"/>
        <end position="107"/>
    </location>
</feature>